<dbReference type="EMBL" id="D38056">
    <property type="protein sequence ID" value="BAA07242.1"/>
    <property type="molecule type" value="mRNA"/>
</dbReference>
<dbReference type="EMBL" id="BC070514">
    <property type="protein sequence ID" value="AAH70514.1"/>
    <property type="molecule type" value="mRNA"/>
</dbReference>
<dbReference type="RefSeq" id="NP_446051.2">
    <property type="nucleotide sequence ID" value="NM_053599.3"/>
</dbReference>
<dbReference type="SMR" id="P97553"/>
<dbReference type="FunCoup" id="P97553">
    <property type="interactions" value="627"/>
</dbReference>
<dbReference type="STRING" id="10116.ENSRNOP00000027920"/>
<dbReference type="GlyCosmos" id="P97553">
    <property type="glycosylation" value="1 site, No reported glycans"/>
</dbReference>
<dbReference type="GlyGen" id="P97553">
    <property type="glycosylation" value="1 site"/>
</dbReference>
<dbReference type="PhosphoSitePlus" id="P97553"/>
<dbReference type="PaxDb" id="10116-ENSRNOP00000027920"/>
<dbReference type="GeneID" id="94268"/>
<dbReference type="KEGG" id="rno:94268"/>
<dbReference type="UCSC" id="RGD:620388">
    <property type="organism name" value="rat"/>
</dbReference>
<dbReference type="AGR" id="RGD:620388"/>
<dbReference type="CTD" id="1942"/>
<dbReference type="RGD" id="620388">
    <property type="gene designation" value="Efna1"/>
</dbReference>
<dbReference type="VEuPathDB" id="HostDB:ENSRNOG00000020573"/>
<dbReference type="eggNOG" id="KOG3858">
    <property type="taxonomic scope" value="Eukaryota"/>
</dbReference>
<dbReference type="HOGENOM" id="CLU_081598_2_0_1"/>
<dbReference type="InParanoid" id="P97553"/>
<dbReference type="OrthoDB" id="23502at9989"/>
<dbReference type="PhylomeDB" id="P97553"/>
<dbReference type="Reactome" id="R-RNO-2682334">
    <property type="pathway name" value="EPH-Ephrin signaling"/>
</dbReference>
<dbReference type="Reactome" id="R-RNO-3928663">
    <property type="pathway name" value="EPHA-mediated growth cone collapse"/>
</dbReference>
<dbReference type="Reactome" id="R-RNO-3928665">
    <property type="pathway name" value="EPH-ephrin mediated repulsion of cells"/>
</dbReference>
<dbReference type="PRO" id="PR:P97553"/>
<dbReference type="Proteomes" id="UP000002494">
    <property type="component" value="Chromosome 2"/>
</dbReference>
<dbReference type="Bgee" id="ENSRNOG00000020573">
    <property type="expression patterns" value="Expressed in lung and 19 other cell types or tissues"/>
</dbReference>
<dbReference type="GO" id="GO:0005576">
    <property type="term" value="C:extracellular region"/>
    <property type="evidence" value="ECO:0007669"/>
    <property type="project" value="UniProtKB-SubCell"/>
</dbReference>
<dbReference type="GO" id="GO:0005886">
    <property type="term" value="C:plasma membrane"/>
    <property type="evidence" value="ECO:0000266"/>
    <property type="project" value="RGD"/>
</dbReference>
<dbReference type="GO" id="GO:0098552">
    <property type="term" value="C:side of membrane"/>
    <property type="evidence" value="ECO:0007669"/>
    <property type="project" value="UniProtKB-KW"/>
</dbReference>
<dbReference type="GO" id="GO:0046875">
    <property type="term" value="F:ephrin receptor binding"/>
    <property type="evidence" value="ECO:0000266"/>
    <property type="project" value="RGD"/>
</dbReference>
<dbReference type="GO" id="GO:0001525">
    <property type="term" value="P:angiogenesis"/>
    <property type="evidence" value="ECO:0000303"/>
    <property type="project" value="RGD"/>
</dbReference>
<dbReference type="GO" id="GO:0003180">
    <property type="term" value="P:aortic valve morphogenesis"/>
    <property type="evidence" value="ECO:0000266"/>
    <property type="project" value="RGD"/>
</dbReference>
<dbReference type="GO" id="GO:0007411">
    <property type="term" value="P:axon guidance"/>
    <property type="evidence" value="ECO:0000318"/>
    <property type="project" value="GO_Central"/>
</dbReference>
<dbReference type="GO" id="GO:0016477">
    <property type="term" value="P:cell migration"/>
    <property type="evidence" value="ECO:0000266"/>
    <property type="project" value="RGD"/>
</dbReference>
<dbReference type="GO" id="GO:0003199">
    <property type="term" value="P:endocardial cushion to mesenchymal transition involved in heart valve formation"/>
    <property type="evidence" value="ECO:0000266"/>
    <property type="project" value="RGD"/>
</dbReference>
<dbReference type="GO" id="GO:0048013">
    <property type="term" value="P:ephrin receptor signaling pathway"/>
    <property type="evidence" value="ECO:0000250"/>
    <property type="project" value="UniProtKB"/>
</dbReference>
<dbReference type="GO" id="GO:0003183">
    <property type="term" value="P:mitral valve morphogenesis"/>
    <property type="evidence" value="ECO:0000266"/>
    <property type="project" value="RGD"/>
</dbReference>
<dbReference type="GO" id="GO:0061002">
    <property type="term" value="P:negative regulation of dendritic spine morphogenesis"/>
    <property type="evidence" value="ECO:0000250"/>
    <property type="project" value="UniProtKB"/>
</dbReference>
<dbReference type="GO" id="GO:0010719">
    <property type="term" value="P:negative regulation of epithelial to mesenchymal transition"/>
    <property type="evidence" value="ECO:0000266"/>
    <property type="project" value="RGD"/>
</dbReference>
<dbReference type="GO" id="GO:0043409">
    <property type="term" value="P:negative regulation of MAPK cascade"/>
    <property type="evidence" value="ECO:0000266"/>
    <property type="project" value="RGD"/>
</dbReference>
<dbReference type="GO" id="GO:1903051">
    <property type="term" value="P:negative regulation of proteolysis involved in protein catabolic process"/>
    <property type="evidence" value="ECO:0000266"/>
    <property type="project" value="RGD"/>
</dbReference>
<dbReference type="GO" id="GO:0070244">
    <property type="term" value="P:negative regulation of thymocyte apoptotic process"/>
    <property type="evidence" value="ECO:0000266"/>
    <property type="project" value="RGD"/>
</dbReference>
<dbReference type="GO" id="GO:0000122">
    <property type="term" value="P:negative regulation of transcription by RNA polymerase II"/>
    <property type="evidence" value="ECO:0000266"/>
    <property type="project" value="RGD"/>
</dbReference>
<dbReference type="GO" id="GO:0030182">
    <property type="term" value="P:neuron differentiation"/>
    <property type="evidence" value="ECO:0000266"/>
    <property type="project" value="RGD"/>
</dbReference>
<dbReference type="GO" id="GO:0014028">
    <property type="term" value="P:notochord formation"/>
    <property type="evidence" value="ECO:0000266"/>
    <property type="project" value="RGD"/>
</dbReference>
<dbReference type="GO" id="GO:1902993">
    <property type="term" value="P:positive regulation of amyloid precursor protein catabolic process"/>
    <property type="evidence" value="ECO:0000266"/>
    <property type="project" value="RGD"/>
</dbReference>
<dbReference type="GO" id="GO:1902004">
    <property type="term" value="P:positive regulation of amyloid-beta formation"/>
    <property type="evidence" value="ECO:0000266"/>
    <property type="project" value="RGD"/>
</dbReference>
<dbReference type="GO" id="GO:1902533">
    <property type="term" value="P:positive regulation of intracellular signal transduction"/>
    <property type="evidence" value="ECO:0000266"/>
    <property type="project" value="RGD"/>
</dbReference>
<dbReference type="GO" id="GO:0043410">
    <property type="term" value="P:positive regulation of MAPK cascade"/>
    <property type="evidence" value="ECO:0000266"/>
    <property type="project" value="RGD"/>
</dbReference>
<dbReference type="GO" id="GO:0050821">
    <property type="term" value="P:protein stabilization"/>
    <property type="evidence" value="ECO:0000266"/>
    <property type="project" value="RGD"/>
</dbReference>
<dbReference type="GO" id="GO:0045765">
    <property type="term" value="P:regulation of angiogenesis"/>
    <property type="evidence" value="ECO:0000266"/>
    <property type="project" value="RGD"/>
</dbReference>
<dbReference type="GO" id="GO:0050770">
    <property type="term" value="P:regulation of axonogenesis"/>
    <property type="evidence" value="ECO:0000266"/>
    <property type="project" value="RGD"/>
</dbReference>
<dbReference type="GO" id="GO:0043535">
    <property type="term" value="P:regulation of blood vessel endothelial cell migration"/>
    <property type="evidence" value="ECO:0000266"/>
    <property type="project" value="RGD"/>
</dbReference>
<dbReference type="GO" id="GO:0033628">
    <property type="term" value="P:regulation of cell adhesion mediated by integrin"/>
    <property type="evidence" value="ECO:0000266"/>
    <property type="project" value="RGD"/>
</dbReference>
<dbReference type="GO" id="GO:0050730">
    <property type="term" value="P:regulation of peptidyl-tyrosine phosphorylation"/>
    <property type="evidence" value="ECO:0000250"/>
    <property type="project" value="UniProtKB"/>
</dbReference>
<dbReference type="GO" id="GO:0034446">
    <property type="term" value="P:substrate adhesion-dependent cell spreading"/>
    <property type="evidence" value="ECO:0000266"/>
    <property type="project" value="RGD"/>
</dbReference>
<dbReference type="CDD" id="cd10425">
    <property type="entry name" value="Ephrin-A_Ectodomain"/>
    <property type="match status" value="1"/>
</dbReference>
<dbReference type="FunFam" id="2.60.40.420:FF:000017">
    <property type="entry name" value="ephrin-A1"/>
    <property type="match status" value="1"/>
</dbReference>
<dbReference type="Gene3D" id="2.60.40.420">
    <property type="entry name" value="Cupredoxins - blue copper proteins"/>
    <property type="match status" value="1"/>
</dbReference>
<dbReference type="InterPro" id="IPR008972">
    <property type="entry name" value="Cupredoxin"/>
</dbReference>
<dbReference type="InterPro" id="IPR031328">
    <property type="entry name" value="Ephrin"/>
</dbReference>
<dbReference type="InterPro" id="IPR034252">
    <property type="entry name" value="Ephrin-A_Ecto"/>
</dbReference>
<dbReference type="InterPro" id="IPR019765">
    <property type="entry name" value="Ephrin_CS"/>
</dbReference>
<dbReference type="InterPro" id="IPR001799">
    <property type="entry name" value="Ephrin_RBD"/>
</dbReference>
<dbReference type="PANTHER" id="PTHR11304">
    <property type="entry name" value="EPHRIN"/>
    <property type="match status" value="1"/>
</dbReference>
<dbReference type="PANTHER" id="PTHR11304:SF19">
    <property type="entry name" value="EPHRIN-A1"/>
    <property type="match status" value="1"/>
</dbReference>
<dbReference type="Pfam" id="PF00812">
    <property type="entry name" value="Ephrin"/>
    <property type="match status" value="1"/>
</dbReference>
<dbReference type="PRINTS" id="PR01347">
    <property type="entry name" value="EPHRIN"/>
</dbReference>
<dbReference type="SUPFAM" id="SSF49503">
    <property type="entry name" value="Cupredoxins"/>
    <property type="match status" value="1"/>
</dbReference>
<dbReference type="PROSITE" id="PS01299">
    <property type="entry name" value="EPHRIN_RBD_1"/>
    <property type="match status" value="1"/>
</dbReference>
<dbReference type="PROSITE" id="PS51551">
    <property type="entry name" value="EPHRIN_RBD_2"/>
    <property type="match status" value="1"/>
</dbReference>
<keyword id="KW-0037">Angiogenesis</keyword>
<keyword id="KW-1003">Cell membrane</keyword>
<keyword id="KW-1015">Disulfide bond</keyword>
<keyword id="KW-0325">Glycoprotein</keyword>
<keyword id="KW-0336">GPI-anchor</keyword>
<keyword id="KW-0449">Lipoprotein</keyword>
<keyword id="KW-0472">Membrane</keyword>
<keyword id="KW-1185">Reference proteome</keyword>
<keyword id="KW-0964">Secreted</keyword>
<keyword id="KW-0732">Signal</keyword>
<keyword id="KW-0043">Tumor suppressor</keyword>
<name>EFNA1_RAT</name>
<feature type="signal peptide" evidence="3">
    <location>
        <begin position="1"/>
        <end position="17"/>
    </location>
</feature>
<feature type="chain" id="PRO_0000008357" description="Ephrin-A1">
    <location>
        <begin position="18"/>
        <end position="182"/>
    </location>
</feature>
<feature type="chain" id="PRO_0000389633" description="Ephrin-A1, secreted form">
    <location>
        <begin position="18"/>
        <end status="unknown"/>
    </location>
</feature>
<feature type="propeptide" id="PRO_0000008358" description="Removed in mature form" evidence="3">
    <location>
        <begin position="183"/>
        <end position="205"/>
    </location>
</feature>
<feature type="domain" description="Ephrin RBD" evidence="4">
    <location>
        <begin position="18"/>
        <end position="151"/>
    </location>
</feature>
<feature type="lipid moiety-binding region" description="GPI-anchor amidated serine" evidence="3">
    <location>
        <position position="182"/>
    </location>
</feature>
<feature type="glycosylation site" description="N-linked (GlcNAc...) asparagine" evidence="3">
    <location>
        <position position="26"/>
    </location>
</feature>
<feature type="disulfide bond" evidence="4">
    <location>
        <begin position="51"/>
        <end position="92"/>
    </location>
</feature>
<feature type="disulfide bond" evidence="4">
    <location>
        <begin position="80"/>
        <end position="140"/>
    </location>
</feature>
<feature type="sequence conflict" description="In Ref. 1; BAA07242." evidence="5" ref="1">
    <original>A</original>
    <variation>V</variation>
    <location>
        <position position="18"/>
    </location>
</feature>
<feature type="sequence conflict" description="In Ref. 1; BAA07242." evidence="5" ref="1">
    <original>T</original>
    <variation>S</variation>
    <location>
        <position position="68"/>
    </location>
</feature>
<feature type="sequence conflict" description="In Ref. 1; BAA07242." evidence="5" ref="1">
    <original>W</original>
    <variation>V</variation>
    <location>
        <position position="90"/>
    </location>
</feature>
<feature type="sequence conflict" description="In Ref. 1; BAA07242." evidence="5" ref="1">
    <original>A</original>
    <variation>V</variation>
    <location>
        <position position="159"/>
    </location>
</feature>
<sequence>MEFLWAPLLGLCCSLAAADRHIVFWNSSNPKFREEDYTVHVQLNDYLDIICPHYEDDSVADAAMERYTLYMVEHQEYVTCEPQSKDQVRWKCNQPSAKHGPEKLSEKFQRFTPFTLGKEFKEGHSYYYISKPIYHQETQCLKLKVTVNGKITHSPHAHANPQEKRLQADDPEVQVLHSIGHSAAPRLFPLVWAVLLLPLLLLQTQ</sequence>
<evidence type="ECO:0000250" key="1"/>
<evidence type="ECO:0000250" key="2">
    <source>
        <dbReference type="UniProtKB" id="P20827"/>
    </source>
</evidence>
<evidence type="ECO:0000255" key="3"/>
<evidence type="ECO:0000255" key="4">
    <source>
        <dbReference type="PROSITE-ProRule" id="PRU00884"/>
    </source>
</evidence>
<evidence type="ECO:0000305" key="5"/>
<protein>
    <recommendedName>
        <fullName>Ephrin-A1</fullName>
    </recommendedName>
    <alternativeName>
        <fullName>EPH-related receptor tyrosine kinase ligand 1</fullName>
        <shortName>LERK-1</shortName>
    </alternativeName>
    <alternativeName>
        <fullName>Immediate early response protein B61</fullName>
    </alternativeName>
    <component>
        <recommendedName>
            <fullName>Ephrin-A1, secreted form</fullName>
        </recommendedName>
    </component>
</protein>
<proteinExistence type="evidence at transcript level"/>
<organism>
    <name type="scientific">Rattus norvegicus</name>
    <name type="common">Rat</name>
    <dbReference type="NCBI Taxonomy" id="10116"/>
    <lineage>
        <taxon>Eukaryota</taxon>
        <taxon>Metazoa</taxon>
        <taxon>Chordata</taxon>
        <taxon>Craniata</taxon>
        <taxon>Vertebrata</taxon>
        <taxon>Euteleostomi</taxon>
        <taxon>Mammalia</taxon>
        <taxon>Eutheria</taxon>
        <taxon>Euarchontoglires</taxon>
        <taxon>Glires</taxon>
        <taxon>Rodentia</taxon>
        <taxon>Myomorpha</taxon>
        <taxon>Muroidea</taxon>
        <taxon>Muridae</taxon>
        <taxon>Murinae</taxon>
        <taxon>Rattus</taxon>
    </lineage>
</organism>
<comment type="function">
    <text evidence="1">Cell surface GPI-bound ligand for Eph receptors, a family of receptor tyrosine kinases which are crucial for migration, repulsion and adhesion during neuronal, vascular and epithelial development. Binds promiscuously Eph receptors residing on adjacent cells, leading to contact-dependent bidirectional signaling into neighboring cells. Plays an important role in angiogenesis and tumor neovascularization. The recruitment of VAV2, VAV3 and PI3-kinase p85 subunit by phosphorylated EPHA2 is critical for EFNA1-induced RAC1 GTPase activation and vascular endothelial cell migration and assembly. Exerts anti-oncogenic effects in tumor cells through activation and down-regulation of EPHA2. Activates EPHA2 by inducing tyrosine phosphorylation which leads to its internalization and degradation. Acts as a negative regulator in the tumorigenesis of gliomas by down-regulating EPHA2 and FAK. Can evoke collapse of embryonic neuronal growth cone and regulates dendritic spine morphogenesis (By similarity).</text>
</comment>
<comment type="subunit">
    <text evidence="1">Monomer. Homodimer. Forms heterodimers with EPHA2. Binds to the receptor tyrosine kinases EPHA2, EPHA3, EPHA4, EPHA5, EPHA6 and EPHA7. Also binds with low affinity to EPHA1 (By similarity).</text>
</comment>
<comment type="subcellular location">
    <subcellularLocation>
        <location evidence="2">Cell membrane</location>
        <topology evidence="2">Lipid-anchor</topology>
        <topology evidence="2">GPI-anchor</topology>
    </subcellularLocation>
</comment>
<comment type="subcellular location">
    <molecule>Ephrin-A1, secreted form</molecule>
    <subcellularLocation>
        <location evidence="2">Secreted</location>
    </subcellularLocation>
</comment>
<comment type="PTM">
    <text evidence="1">Undergoes proteolysis by a metalloprotease to give rise to a soluble monomeric form.</text>
</comment>
<comment type="PTM">
    <text evidence="2">N-Glycosylation is required for binding to EPHA2 receptor and inducing its internalization.</text>
</comment>
<comment type="similarity">
    <text evidence="4">Belongs to the ephrin family.</text>
</comment>
<reference key="1">
    <citation type="journal article" date="1995" name="Oncogene">
        <title>Molecular cloning and expression of rat and mouse B61 gene: implications on organogenesis.</title>
        <authorList>
            <person name="Takahashi H."/>
            <person name="Ikeda T."/>
        </authorList>
    </citation>
    <scope>NUCLEOTIDE SEQUENCE [MRNA]</scope>
    <source>
        <strain>Wistar</strain>
        <tissue>Brain</tissue>
    </source>
</reference>
<reference key="2">
    <citation type="journal article" date="2004" name="Genome Res.">
        <title>The status, quality, and expansion of the NIH full-length cDNA project: the Mammalian Gene Collection (MGC).</title>
        <authorList>
            <consortium name="The MGC Project Team"/>
        </authorList>
    </citation>
    <scope>NUCLEOTIDE SEQUENCE [LARGE SCALE MRNA]</scope>
    <source>
        <tissue>Lung</tissue>
    </source>
</reference>
<accession>P97553</accession>
<accession>Q6NS29</accession>
<gene>
    <name type="primary">Efna1</name>
    <name type="synonym">Epgl1</name>
    <name type="synonym">Lerk1</name>
</gene>